<organism>
    <name type="scientific">Brucella melitensis biotype 1 (strain ATCC 23456 / CCUG 17765 / NCTC 10094 / 16M)</name>
    <dbReference type="NCBI Taxonomy" id="224914"/>
    <lineage>
        <taxon>Bacteria</taxon>
        <taxon>Pseudomonadati</taxon>
        <taxon>Pseudomonadota</taxon>
        <taxon>Alphaproteobacteria</taxon>
        <taxon>Hyphomicrobiales</taxon>
        <taxon>Brucellaceae</taxon>
        <taxon>Brucella/Ochrobactrum group</taxon>
        <taxon>Brucella</taxon>
    </lineage>
</organism>
<name>RS10_BRUME</name>
<protein>
    <recommendedName>
        <fullName evidence="1">Small ribosomal subunit protein uS10</fullName>
    </recommendedName>
    <alternativeName>
        <fullName evidence="2">30S ribosomal protein S10</fullName>
    </alternativeName>
</protein>
<proteinExistence type="inferred from homology"/>
<evidence type="ECO:0000255" key="1">
    <source>
        <dbReference type="HAMAP-Rule" id="MF_00508"/>
    </source>
</evidence>
<evidence type="ECO:0000305" key="2"/>
<accession>P66324</accession>
<accession>Q8YHP1</accession>
<comment type="function">
    <text evidence="1">Involved in the binding of tRNA to the ribosomes.</text>
</comment>
<comment type="subunit">
    <text evidence="1">Part of the 30S ribosomal subunit.</text>
</comment>
<comment type="similarity">
    <text evidence="1">Belongs to the universal ribosomal protein uS10 family.</text>
</comment>
<sequence>MNGQNIRIRLKAFDHRILDASTREIVSTAKRTGANVRGPIPLPTRIEKFTVNRSPHIDKKSREQFEMRTHKRLLDIVDPTPQTVDALMKLDLSAGVDVEIKL</sequence>
<feature type="chain" id="PRO_0000146507" description="Small ribosomal subunit protein uS10">
    <location>
        <begin position="1"/>
        <end position="102"/>
    </location>
</feature>
<keyword id="KW-0687">Ribonucleoprotein</keyword>
<keyword id="KW-0689">Ribosomal protein</keyword>
<dbReference type="EMBL" id="AE008917">
    <property type="protein sequence ID" value="AAL51937.1"/>
    <property type="molecule type" value="Genomic_DNA"/>
</dbReference>
<dbReference type="PIR" id="AF3346">
    <property type="entry name" value="AF3346"/>
</dbReference>
<dbReference type="RefSeq" id="WP_002964363.1">
    <property type="nucleotide sequence ID" value="NZ_GG703780.1"/>
</dbReference>
<dbReference type="SMR" id="P66324"/>
<dbReference type="GeneID" id="97533523"/>
<dbReference type="KEGG" id="bme:BMEI0756"/>
<dbReference type="KEGG" id="bmel:DK63_666"/>
<dbReference type="PATRIC" id="fig|224914.52.peg.697"/>
<dbReference type="eggNOG" id="COG0051">
    <property type="taxonomic scope" value="Bacteria"/>
</dbReference>
<dbReference type="PhylomeDB" id="P66324"/>
<dbReference type="Proteomes" id="UP000000419">
    <property type="component" value="Chromosome I"/>
</dbReference>
<dbReference type="GO" id="GO:1990904">
    <property type="term" value="C:ribonucleoprotein complex"/>
    <property type="evidence" value="ECO:0007669"/>
    <property type="project" value="UniProtKB-KW"/>
</dbReference>
<dbReference type="GO" id="GO:0005840">
    <property type="term" value="C:ribosome"/>
    <property type="evidence" value="ECO:0007669"/>
    <property type="project" value="UniProtKB-KW"/>
</dbReference>
<dbReference type="GO" id="GO:0003735">
    <property type="term" value="F:structural constituent of ribosome"/>
    <property type="evidence" value="ECO:0007669"/>
    <property type="project" value="InterPro"/>
</dbReference>
<dbReference type="GO" id="GO:0000049">
    <property type="term" value="F:tRNA binding"/>
    <property type="evidence" value="ECO:0007669"/>
    <property type="project" value="UniProtKB-UniRule"/>
</dbReference>
<dbReference type="GO" id="GO:0006412">
    <property type="term" value="P:translation"/>
    <property type="evidence" value="ECO:0007669"/>
    <property type="project" value="UniProtKB-UniRule"/>
</dbReference>
<dbReference type="FunFam" id="3.30.70.600:FF:000001">
    <property type="entry name" value="30S ribosomal protein S10"/>
    <property type="match status" value="1"/>
</dbReference>
<dbReference type="Gene3D" id="3.30.70.600">
    <property type="entry name" value="Ribosomal protein S10 domain"/>
    <property type="match status" value="1"/>
</dbReference>
<dbReference type="HAMAP" id="MF_00508">
    <property type="entry name" value="Ribosomal_uS10"/>
    <property type="match status" value="1"/>
</dbReference>
<dbReference type="InterPro" id="IPR001848">
    <property type="entry name" value="Ribosomal_uS10"/>
</dbReference>
<dbReference type="InterPro" id="IPR018268">
    <property type="entry name" value="Ribosomal_uS10_CS"/>
</dbReference>
<dbReference type="InterPro" id="IPR027486">
    <property type="entry name" value="Ribosomal_uS10_dom"/>
</dbReference>
<dbReference type="InterPro" id="IPR036838">
    <property type="entry name" value="Ribosomal_uS10_dom_sf"/>
</dbReference>
<dbReference type="NCBIfam" id="NF001861">
    <property type="entry name" value="PRK00596.1"/>
    <property type="match status" value="1"/>
</dbReference>
<dbReference type="NCBIfam" id="TIGR01049">
    <property type="entry name" value="rpsJ_bact"/>
    <property type="match status" value="1"/>
</dbReference>
<dbReference type="PANTHER" id="PTHR11700">
    <property type="entry name" value="30S RIBOSOMAL PROTEIN S10 FAMILY MEMBER"/>
    <property type="match status" value="1"/>
</dbReference>
<dbReference type="Pfam" id="PF00338">
    <property type="entry name" value="Ribosomal_S10"/>
    <property type="match status" value="1"/>
</dbReference>
<dbReference type="PRINTS" id="PR00971">
    <property type="entry name" value="RIBOSOMALS10"/>
</dbReference>
<dbReference type="SMART" id="SM01403">
    <property type="entry name" value="Ribosomal_S10"/>
    <property type="match status" value="1"/>
</dbReference>
<dbReference type="SUPFAM" id="SSF54999">
    <property type="entry name" value="Ribosomal protein S10"/>
    <property type="match status" value="1"/>
</dbReference>
<dbReference type="PROSITE" id="PS00361">
    <property type="entry name" value="RIBOSOMAL_S10"/>
    <property type="match status" value="1"/>
</dbReference>
<gene>
    <name evidence="1" type="primary">rpsJ</name>
    <name type="ordered locus">BMEI0756</name>
</gene>
<reference key="1">
    <citation type="journal article" date="2002" name="Proc. Natl. Acad. Sci. U.S.A.">
        <title>The genome sequence of the facultative intracellular pathogen Brucella melitensis.</title>
        <authorList>
            <person name="DelVecchio V.G."/>
            <person name="Kapatral V."/>
            <person name="Redkar R.J."/>
            <person name="Patra G."/>
            <person name="Mujer C."/>
            <person name="Los T."/>
            <person name="Ivanova N."/>
            <person name="Anderson I."/>
            <person name="Bhattacharyya A."/>
            <person name="Lykidis A."/>
            <person name="Reznik G."/>
            <person name="Jablonski L."/>
            <person name="Larsen N."/>
            <person name="D'Souza M."/>
            <person name="Bernal A."/>
            <person name="Mazur M."/>
            <person name="Goltsman E."/>
            <person name="Selkov E."/>
            <person name="Elzer P.H."/>
            <person name="Hagius S."/>
            <person name="O'Callaghan D."/>
            <person name="Letesson J.-J."/>
            <person name="Haselkorn R."/>
            <person name="Kyrpides N.C."/>
            <person name="Overbeek R."/>
        </authorList>
    </citation>
    <scope>NUCLEOTIDE SEQUENCE [LARGE SCALE GENOMIC DNA]</scope>
    <source>
        <strain>ATCC 23456 / CCUG 17765 / NCTC 10094 / 16M</strain>
    </source>
</reference>